<gene>
    <name type="ordered locus">SPT_1257</name>
</gene>
<reference key="1">
    <citation type="journal article" date="2010" name="Genome Biol.">
        <title>Structure and dynamics of the pan-genome of Streptococcus pneumoniae and closely related species.</title>
        <authorList>
            <person name="Donati C."/>
            <person name="Hiller N.L."/>
            <person name="Tettelin H."/>
            <person name="Muzzi A."/>
            <person name="Croucher N.J."/>
            <person name="Angiuoli S.V."/>
            <person name="Oggioni M."/>
            <person name="Dunning Hotopp J.C."/>
            <person name="Hu F.Z."/>
            <person name="Riley D.R."/>
            <person name="Covacci A."/>
            <person name="Mitchell T.J."/>
            <person name="Bentley S.D."/>
            <person name="Kilian M."/>
            <person name="Ehrlich G.D."/>
            <person name="Rappuoli R."/>
            <person name="Moxon E.R."/>
            <person name="Masignani V."/>
        </authorList>
    </citation>
    <scope>NUCLEOTIDE SEQUENCE [LARGE SCALE GENOMIC DNA]</scope>
    <source>
        <strain>Taiwan19F-14</strain>
    </source>
</reference>
<organism>
    <name type="scientific">Streptococcus pneumoniae (strain Taiwan19F-14)</name>
    <dbReference type="NCBI Taxonomy" id="487213"/>
    <lineage>
        <taxon>Bacteria</taxon>
        <taxon>Bacillati</taxon>
        <taxon>Bacillota</taxon>
        <taxon>Bacilli</taxon>
        <taxon>Lactobacillales</taxon>
        <taxon>Streptococcaceae</taxon>
        <taxon>Streptococcus</taxon>
    </lineage>
</organism>
<dbReference type="EMBL" id="CP000921">
    <property type="protein sequence ID" value="ACO22735.1"/>
    <property type="molecule type" value="Genomic_DNA"/>
</dbReference>
<dbReference type="RefSeq" id="WP_001232081.1">
    <property type="nucleotide sequence ID" value="NC_012469.1"/>
</dbReference>
<dbReference type="SMR" id="C1CRV1"/>
<dbReference type="KEGG" id="snt:SPT_1257"/>
<dbReference type="HOGENOM" id="CLU_177534_1_0_9"/>
<dbReference type="Gene3D" id="1.10.150.260">
    <property type="entry name" value="YozE SAM-like"/>
    <property type="match status" value="1"/>
</dbReference>
<dbReference type="HAMAP" id="MF_01538">
    <property type="entry name" value="UPF0346"/>
    <property type="match status" value="1"/>
</dbReference>
<dbReference type="InterPro" id="IPR010673">
    <property type="entry name" value="UPF0346"/>
</dbReference>
<dbReference type="InterPro" id="IPR023089">
    <property type="entry name" value="YozE_SAM-like"/>
</dbReference>
<dbReference type="InterPro" id="IPR036806">
    <property type="entry name" value="YozE_SAM-like_sf"/>
</dbReference>
<dbReference type="NCBIfam" id="NF010193">
    <property type="entry name" value="PRK13672.1"/>
    <property type="match status" value="1"/>
</dbReference>
<dbReference type="Pfam" id="PF06855">
    <property type="entry name" value="YozE_SAM_like"/>
    <property type="match status" value="1"/>
</dbReference>
<dbReference type="PIRSF" id="PIRSF037262">
    <property type="entry name" value="UCP037262"/>
    <property type="match status" value="1"/>
</dbReference>
<dbReference type="SUPFAM" id="SSF140652">
    <property type="entry name" value="YozE-like"/>
    <property type="match status" value="1"/>
</dbReference>
<evidence type="ECO:0000255" key="1">
    <source>
        <dbReference type="HAMAP-Rule" id="MF_01538"/>
    </source>
</evidence>
<sequence>MRKSFYTWLMTERNPKSNSPKAILADLAFEEAAFPKHTDDFDEVSRFLEEHASFSFNLGDFDAIWQEYLEH</sequence>
<name>Y1257_STRZT</name>
<accession>C1CRV1</accession>
<comment type="similarity">
    <text evidence="1">Belongs to the UPF0346 family.</text>
</comment>
<proteinExistence type="inferred from homology"/>
<feature type="chain" id="PRO_1000185211" description="UPF0346 protein SPT_1257">
    <location>
        <begin position="1"/>
        <end position="71"/>
    </location>
</feature>
<protein>
    <recommendedName>
        <fullName evidence="1">UPF0346 protein SPT_1257</fullName>
    </recommendedName>
</protein>